<evidence type="ECO:0000250" key="1">
    <source>
        <dbReference type="UniProtKB" id="A0A509AQE6"/>
    </source>
</evidence>
<evidence type="ECO:0000250" key="2">
    <source>
        <dbReference type="UniProtKB" id="Q8IBS5"/>
    </source>
</evidence>
<evidence type="ECO:0000255" key="3">
    <source>
        <dbReference type="PROSITE-ProRule" id="PRU00159"/>
    </source>
</evidence>
<evidence type="ECO:0000255" key="4">
    <source>
        <dbReference type="PROSITE-ProRule" id="PRU00448"/>
    </source>
</evidence>
<evidence type="ECO:0000255" key="5">
    <source>
        <dbReference type="PROSITE-ProRule" id="PRU10027"/>
    </source>
</evidence>
<evidence type="ECO:0000269" key="6">
    <source>
    </source>
</evidence>
<evidence type="ECO:0000269" key="7">
    <source>
    </source>
</evidence>
<evidence type="ECO:0000269" key="8">
    <source>
    </source>
</evidence>
<evidence type="ECO:0000303" key="9">
    <source>
    </source>
</evidence>
<evidence type="ECO:0000303" key="10">
    <source>
    </source>
</evidence>
<evidence type="ECO:0000305" key="11"/>
<evidence type="ECO:0000312" key="12">
    <source>
        <dbReference type="EMBL" id="VWP77689.1"/>
    </source>
</evidence>
<evidence type="ECO:0000312" key="13">
    <source>
        <dbReference type="Proteomes" id="UP000001450"/>
    </source>
</evidence>
<dbReference type="EC" id="2.7.11.1" evidence="6 8"/>
<dbReference type="EMBL" id="AL844509">
    <property type="protein sequence ID" value="VWP77689.1"/>
    <property type="molecule type" value="Genomic_DNA"/>
</dbReference>
<dbReference type="RefSeq" id="XP_001350105.1">
    <property type="nucleotide sequence ID" value="XM_001350069.1"/>
</dbReference>
<dbReference type="SMR" id="A0A5K1K8H0"/>
<dbReference type="FunCoup" id="A0A5K1K8H0">
    <property type="interactions" value="9"/>
</dbReference>
<dbReference type="STRING" id="36329.A0A5K1K8H0"/>
<dbReference type="PaxDb" id="5833-PF13_0211"/>
<dbReference type="GeneID" id="814178"/>
<dbReference type="KEGG" id="pfa:PF3D7_1337800"/>
<dbReference type="VEuPathDB" id="PlasmoDB:PF3D7_1337800"/>
<dbReference type="InParanoid" id="A0A5K1K8H0"/>
<dbReference type="OMA" id="TCVAYQL"/>
<dbReference type="OrthoDB" id="40902at2759"/>
<dbReference type="Proteomes" id="UP000001450">
    <property type="component" value="Chromosome 13"/>
</dbReference>
<dbReference type="GO" id="GO:0005737">
    <property type="term" value="C:cytoplasm"/>
    <property type="evidence" value="ECO:0000314"/>
    <property type="project" value="UniProtKB"/>
</dbReference>
<dbReference type="GO" id="GO:0031410">
    <property type="term" value="C:cytoplasmic vesicle"/>
    <property type="evidence" value="ECO:0007669"/>
    <property type="project" value="UniProtKB-KW"/>
</dbReference>
<dbReference type="GO" id="GO:0031234">
    <property type="term" value="C:extrinsic component of cytoplasmic side of plasma membrane"/>
    <property type="evidence" value="ECO:0000314"/>
    <property type="project" value="UniProtKB"/>
</dbReference>
<dbReference type="GO" id="GO:0019898">
    <property type="term" value="C:extrinsic component of membrane"/>
    <property type="evidence" value="ECO:0000314"/>
    <property type="project" value="UniProtKB"/>
</dbReference>
<dbReference type="GO" id="GO:0033163">
    <property type="term" value="C:microneme membrane"/>
    <property type="evidence" value="ECO:0000314"/>
    <property type="project" value="UniProtKB"/>
</dbReference>
<dbReference type="GO" id="GO:0005634">
    <property type="term" value="C:nucleus"/>
    <property type="evidence" value="ECO:0000318"/>
    <property type="project" value="GO_Central"/>
</dbReference>
<dbReference type="GO" id="GO:0005886">
    <property type="term" value="C:plasma membrane"/>
    <property type="evidence" value="ECO:0000314"/>
    <property type="project" value="UniProtKB"/>
</dbReference>
<dbReference type="GO" id="GO:0005524">
    <property type="term" value="F:ATP binding"/>
    <property type="evidence" value="ECO:0007669"/>
    <property type="project" value="UniProtKB-KW"/>
</dbReference>
<dbReference type="GO" id="GO:0005509">
    <property type="term" value="F:calcium ion binding"/>
    <property type="evidence" value="ECO:0007669"/>
    <property type="project" value="InterPro"/>
</dbReference>
<dbReference type="GO" id="GO:0009931">
    <property type="term" value="F:calcium-dependent protein serine/threonine kinase activity"/>
    <property type="evidence" value="ECO:0000314"/>
    <property type="project" value="UniProtKB"/>
</dbReference>
<dbReference type="GO" id="GO:0004683">
    <property type="term" value="F:calcium/calmodulin-dependent protein kinase activity"/>
    <property type="evidence" value="ECO:0000318"/>
    <property type="project" value="GO_Central"/>
</dbReference>
<dbReference type="GO" id="GO:0005516">
    <property type="term" value="F:calmodulin binding"/>
    <property type="evidence" value="ECO:0000318"/>
    <property type="project" value="GO_Central"/>
</dbReference>
<dbReference type="GO" id="GO:0106310">
    <property type="term" value="F:protein serine kinase activity"/>
    <property type="evidence" value="ECO:0007669"/>
    <property type="project" value="RHEA"/>
</dbReference>
<dbReference type="GO" id="GO:0035556">
    <property type="term" value="P:intracellular signal transduction"/>
    <property type="evidence" value="ECO:0000318"/>
    <property type="project" value="GO_Central"/>
</dbReference>
<dbReference type="GO" id="GO:1903307">
    <property type="term" value="P:positive regulation of regulated secretory pathway"/>
    <property type="evidence" value="ECO:0000314"/>
    <property type="project" value="UniProtKB"/>
</dbReference>
<dbReference type="GO" id="GO:0006468">
    <property type="term" value="P:protein phosphorylation"/>
    <property type="evidence" value="ECO:0000314"/>
    <property type="project" value="UniProtKB"/>
</dbReference>
<dbReference type="CDD" id="cd00051">
    <property type="entry name" value="EFh"/>
    <property type="match status" value="1"/>
</dbReference>
<dbReference type="CDD" id="cd05117">
    <property type="entry name" value="STKc_CAMK"/>
    <property type="match status" value="1"/>
</dbReference>
<dbReference type="FunFam" id="3.30.200.20:FF:000315">
    <property type="entry name" value="Calcium-dependent protein kinase 3"/>
    <property type="match status" value="1"/>
</dbReference>
<dbReference type="FunFam" id="1.10.510.10:FF:000475">
    <property type="entry name" value="Calcium-dependent protein kinase 5"/>
    <property type="match status" value="1"/>
</dbReference>
<dbReference type="FunFam" id="1.10.238.10:FF:000003">
    <property type="entry name" value="Calmodulin A"/>
    <property type="match status" value="1"/>
</dbReference>
<dbReference type="Gene3D" id="1.10.238.10">
    <property type="entry name" value="EF-hand"/>
    <property type="match status" value="2"/>
</dbReference>
<dbReference type="Gene3D" id="3.30.200.20">
    <property type="entry name" value="Phosphorylase Kinase, domain 1"/>
    <property type="match status" value="1"/>
</dbReference>
<dbReference type="Gene3D" id="1.10.510.10">
    <property type="entry name" value="Transferase(Phosphotransferase) domain 1"/>
    <property type="match status" value="1"/>
</dbReference>
<dbReference type="InterPro" id="IPR050205">
    <property type="entry name" value="CDPK_Ser/Thr_kinases"/>
</dbReference>
<dbReference type="InterPro" id="IPR011992">
    <property type="entry name" value="EF-hand-dom_pair"/>
</dbReference>
<dbReference type="InterPro" id="IPR018247">
    <property type="entry name" value="EF_Hand_1_Ca_BS"/>
</dbReference>
<dbReference type="InterPro" id="IPR002048">
    <property type="entry name" value="EF_hand_dom"/>
</dbReference>
<dbReference type="InterPro" id="IPR011009">
    <property type="entry name" value="Kinase-like_dom_sf"/>
</dbReference>
<dbReference type="InterPro" id="IPR000719">
    <property type="entry name" value="Prot_kinase_dom"/>
</dbReference>
<dbReference type="InterPro" id="IPR017441">
    <property type="entry name" value="Protein_kinase_ATP_BS"/>
</dbReference>
<dbReference type="InterPro" id="IPR008271">
    <property type="entry name" value="Ser/Thr_kinase_AS"/>
</dbReference>
<dbReference type="PANTHER" id="PTHR24349">
    <property type="entry name" value="SERINE/THREONINE-PROTEIN KINASE"/>
    <property type="match status" value="1"/>
</dbReference>
<dbReference type="Pfam" id="PF13499">
    <property type="entry name" value="EF-hand_7"/>
    <property type="match status" value="2"/>
</dbReference>
<dbReference type="Pfam" id="PF00069">
    <property type="entry name" value="Pkinase"/>
    <property type="match status" value="1"/>
</dbReference>
<dbReference type="SMART" id="SM00054">
    <property type="entry name" value="EFh"/>
    <property type="match status" value="4"/>
</dbReference>
<dbReference type="SMART" id="SM00220">
    <property type="entry name" value="S_TKc"/>
    <property type="match status" value="1"/>
</dbReference>
<dbReference type="SUPFAM" id="SSF47473">
    <property type="entry name" value="EF-hand"/>
    <property type="match status" value="1"/>
</dbReference>
<dbReference type="SUPFAM" id="SSF56112">
    <property type="entry name" value="Protein kinase-like (PK-like)"/>
    <property type="match status" value="1"/>
</dbReference>
<dbReference type="PROSITE" id="PS00018">
    <property type="entry name" value="EF_HAND_1"/>
    <property type="match status" value="4"/>
</dbReference>
<dbReference type="PROSITE" id="PS50222">
    <property type="entry name" value="EF_HAND_2"/>
    <property type="match status" value="4"/>
</dbReference>
<dbReference type="PROSITE" id="PS00107">
    <property type="entry name" value="PROTEIN_KINASE_ATP"/>
    <property type="match status" value="1"/>
</dbReference>
<dbReference type="PROSITE" id="PS50011">
    <property type="entry name" value="PROTEIN_KINASE_DOM"/>
    <property type="match status" value="1"/>
</dbReference>
<dbReference type="PROSITE" id="PS00108">
    <property type="entry name" value="PROTEIN_KINASE_ST"/>
    <property type="match status" value="1"/>
</dbReference>
<reference evidence="13" key="1">
    <citation type="journal article" date="2002" name="Nature">
        <title>Genome sequence of the human malaria parasite Plasmodium falciparum.</title>
        <authorList>
            <person name="Gardner M.J."/>
            <person name="Hall N."/>
            <person name="Fung E."/>
            <person name="White O."/>
            <person name="Berriman M."/>
            <person name="Hyman R.W."/>
            <person name="Carlton J.M."/>
            <person name="Pain A."/>
            <person name="Nelson K.E."/>
            <person name="Bowman S."/>
            <person name="Paulsen I.T."/>
            <person name="James K.D."/>
            <person name="Eisen J.A."/>
            <person name="Rutherford K.M."/>
            <person name="Salzberg S.L."/>
            <person name="Craig A."/>
            <person name="Kyes S."/>
            <person name="Chan M.-S."/>
            <person name="Nene V."/>
            <person name="Shallom S.J."/>
            <person name="Suh B."/>
            <person name="Peterson J."/>
            <person name="Angiuoli S."/>
            <person name="Pertea M."/>
            <person name="Allen J."/>
            <person name="Selengut J."/>
            <person name="Haft D."/>
            <person name="Mather M.W."/>
            <person name="Vaidya A.B."/>
            <person name="Martin D.M.A."/>
            <person name="Fairlamb A.H."/>
            <person name="Fraunholz M.J."/>
            <person name="Roos D.S."/>
            <person name="Ralph S.A."/>
            <person name="McFadden G.I."/>
            <person name="Cummings L.M."/>
            <person name="Subramanian G.M."/>
            <person name="Mungall C."/>
            <person name="Venter J.C."/>
            <person name="Carucci D.J."/>
            <person name="Hoffman S.L."/>
            <person name="Newbold C."/>
            <person name="Davis R.W."/>
            <person name="Fraser C.M."/>
            <person name="Barrell B.G."/>
        </authorList>
    </citation>
    <scope>NUCLEOTIDE SEQUENCE [LARGE SCALE GENOMIC DNA]</scope>
    <source>
        <strain evidence="13">3D7</strain>
    </source>
</reference>
<reference evidence="13" key="2">
    <citation type="journal article" date="2002" name="Nature">
        <title>Sequence of Plasmodium falciparum chromosomes 1, 3-9 and 13.</title>
        <authorList>
            <person name="Hall N."/>
            <person name="Pain A."/>
            <person name="Berriman M."/>
            <person name="Churcher C.M."/>
            <person name="Harris B."/>
            <person name="Harris D."/>
            <person name="Mungall K.L."/>
            <person name="Bowman S."/>
            <person name="Atkin R."/>
            <person name="Baker S."/>
            <person name="Barron A."/>
            <person name="Brooks K."/>
            <person name="Buckee C.O."/>
            <person name="Burrows C."/>
            <person name="Cherevach I."/>
            <person name="Chillingworth C."/>
            <person name="Chillingworth T."/>
            <person name="Christodoulou Z."/>
            <person name="Clark L."/>
            <person name="Clark R."/>
            <person name="Corton C."/>
            <person name="Cronin A."/>
            <person name="Davies R.M."/>
            <person name="Davis P."/>
            <person name="Dear P."/>
            <person name="Dearden F."/>
            <person name="Doggett J."/>
            <person name="Feltwell T."/>
            <person name="Goble A."/>
            <person name="Goodhead I."/>
            <person name="Gwilliam R."/>
            <person name="Hamlin N."/>
            <person name="Hance Z."/>
            <person name="Harper D."/>
            <person name="Hauser H."/>
            <person name="Hornsby T."/>
            <person name="Holroyd S."/>
            <person name="Horrocks P."/>
            <person name="Humphray S."/>
            <person name="Jagels K."/>
            <person name="James K.D."/>
            <person name="Johnson D."/>
            <person name="Kerhornou A."/>
            <person name="Knights A."/>
            <person name="Konfortov B."/>
            <person name="Kyes S."/>
            <person name="Larke N."/>
            <person name="Lawson D."/>
            <person name="Lennard N."/>
            <person name="Line A."/>
            <person name="Maddison M."/>
            <person name="Mclean J."/>
            <person name="Mooney P."/>
            <person name="Moule S."/>
            <person name="Murphy L."/>
            <person name="Oliver K."/>
            <person name="Ormond D."/>
            <person name="Price C."/>
            <person name="Quail M.A."/>
            <person name="Rabbinowitsch E."/>
            <person name="Rajandream M.A."/>
            <person name="Rutter S."/>
            <person name="Rutherford K.M."/>
            <person name="Sanders M."/>
            <person name="Simmonds M."/>
            <person name="Seeger K."/>
            <person name="Sharp S."/>
            <person name="Smith R."/>
            <person name="Squares R."/>
            <person name="Squares S."/>
            <person name="Stevens K."/>
            <person name="Taylor K."/>
            <person name="Tivey A."/>
            <person name="Unwin L."/>
            <person name="Whitehead S."/>
            <person name="Woodward J.R."/>
            <person name="Sulston J.E."/>
            <person name="Craig A."/>
            <person name="Newbold C."/>
            <person name="Barrell B.G."/>
        </authorList>
    </citation>
    <scope>NUCLEOTIDE SEQUENCE [LARGE SCALE GENOMIC DNA]</scope>
    <source>
        <strain evidence="13">3D7</strain>
    </source>
</reference>
<reference evidence="11" key="3">
    <citation type="journal article" date="2010" name="Science">
        <title>A plant-like kinase in Plasmodium falciparum regulates parasite egress from erythrocytes.</title>
        <authorList>
            <person name="Dvorin J.D."/>
            <person name="Martyn D.C."/>
            <person name="Patel S.D."/>
            <person name="Grimley J.S."/>
            <person name="Collins C.R."/>
            <person name="Hopp C.S."/>
            <person name="Bright A.T."/>
            <person name="Westenberger S."/>
            <person name="Winzeler E."/>
            <person name="Blackman M.J."/>
            <person name="Baker D.A."/>
            <person name="Wandless T.J."/>
            <person name="Duraisingh M.T."/>
        </authorList>
    </citation>
    <scope>FUNCTION</scope>
    <scope>CATALYTIC ACTIVITY</scope>
    <scope>COFACTOR</scope>
    <scope>ACTIVITY REGULATION</scope>
    <scope>SUBCELLULAR LOCATION</scope>
    <scope>DEVELOPMENTAL STAGE</scope>
    <scope>DISRUPTION PHENOTYPE</scope>
    <scope>PHOSPHORYLATION</scope>
</reference>
<reference evidence="11" key="4">
    <citation type="journal article" date="2018" name="MBio">
        <title>Calcium-Dependent Protein Kinase 5 Is Required for Release of Egress-Specific Organelles in Plasmodium falciparum.</title>
        <authorList>
            <person name="Absalon S."/>
            <person name="Blomqvist K."/>
            <person name="Rudlaff R.M."/>
            <person name="DeLano T.J."/>
            <person name="Pollastri M.P."/>
            <person name="Dvorin J.D."/>
        </authorList>
    </citation>
    <scope>FUNCTION</scope>
    <scope>SUBCELLULAR LOCATION</scope>
    <scope>DISRUPTION PHENOTYPE</scope>
</reference>
<reference evidence="11" key="5">
    <citation type="journal article" date="2020" name="MSphere">
        <title>Influence of Plasmodium falciparum Calcium-Dependent Protein Kinase 5 (PfCDPK5) on the Late Schizont Stage Phosphoproteome.</title>
        <authorList>
            <person name="Blomqvist K."/>
            <person name="Helmel M."/>
            <person name="Wang C."/>
            <person name="Absalon S."/>
            <person name="Labunska T."/>
            <person name="Rudlaff R.M."/>
            <person name="Adapa S."/>
            <person name="Jiang R."/>
            <person name="Steen H."/>
            <person name="Dvorin J.D."/>
        </authorList>
    </citation>
    <scope>FUNCTION</scope>
    <scope>CATALYTIC ACTIVITY</scope>
    <scope>SUBCELLULAR LOCATION</scope>
    <scope>DISRUPTION PHENOTYPE</scope>
</reference>
<organism evidence="13">
    <name type="scientific">Plasmodium falciparum (isolate 3D7)</name>
    <dbReference type="NCBI Taxonomy" id="36329"/>
    <lineage>
        <taxon>Eukaryota</taxon>
        <taxon>Sar</taxon>
        <taxon>Alveolata</taxon>
        <taxon>Apicomplexa</taxon>
        <taxon>Aconoidasida</taxon>
        <taxon>Haemosporida</taxon>
        <taxon>Plasmodiidae</taxon>
        <taxon>Plasmodium</taxon>
        <taxon>Plasmodium (Laverania)</taxon>
    </lineage>
</organism>
<name>CDPK5_PLAF7</name>
<sequence>MKETEVEDMDTNRKDGKIKKKEKIVNMKNEEVKSTTKSTLADSDEDYSIITLCTKCLSKKLEDNKNRIILDSKAFKDNRLKGRCSVSSNEDPLDNKLNLSPYFDRSQIIQEIILMNNDELSDVYEIDRYKLGKGSYGNVVKAVSKRTGQQRAIKIIEKKKIHNIERLKREILIMKQMDHPNIIKLYEVYEDNEKLYLVLELCDGGELFDKIVKYGSFSEYEAYKIMKQIFSALYYCHSKNIMHRDLKPENILYVDNTEDSPIQIIDWGFASKCMNNHNLKSVVGTPYYIAPEILRGKYDKRCDIWSSGVIMYILLCGYPPFNGKNNDEILKKVEKGEFVFDSNYWARVSDDAKDLICQCLNYNYKERIDVEQVLKHRWFKKFKSNNLIINKTLNKTLIEKFKEFHKLCKIKKLAVTCIAYQLNEKDIGKLKKTFEAFDHNGDGVLTISEIFQCLKVNDNEFDRELYFLLKQLDTDGNGLIDYTEFLAACLDHSIFQQDVICRNAFNVFDLDGDGVITKDELFKILSFSAVQVSFSKEIIENLIKEVDSNNDGFIDYDEFYKMMTGVKE</sequence>
<accession>A0A5K1K8H0</accession>
<keyword id="KW-0067">ATP-binding</keyword>
<keyword id="KW-0106">Calcium</keyword>
<keyword id="KW-1003">Cell membrane</keyword>
<keyword id="KW-0963">Cytoplasm</keyword>
<keyword id="KW-0968">Cytoplasmic vesicle</keyword>
<keyword id="KW-0418">Kinase</keyword>
<keyword id="KW-0449">Lipoprotein</keyword>
<keyword id="KW-0472">Membrane</keyword>
<keyword id="KW-0479">Metal-binding</keyword>
<keyword id="KW-0547">Nucleotide-binding</keyword>
<keyword id="KW-0564">Palmitate</keyword>
<keyword id="KW-0597">Phosphoprotein</keyword>
<keyword id="KW-1185">Reference proteome</keyword>
<keyword id="KW-0677">Repeat</keyword>
<keyword id="KW-0723">Serine/threonine-protein kinase</keyword>
<keyword id="KW-0808">Transferase</keyword>
<gene>
    <name evidence="10" type="primary">CDPK5</name>
    <name evidence="12" type="ORF">PF3D7_1337800</name>
</gene>
<feature type="chain" id="PRO_0000452845" description="Calcium-dependent protein kinase 5">
    <location>
        <begin position="1"/>
        <end position="568"/>
    </location>
</feature>
<feature type="domain" description="Protein kinase" evidence="3">
    <location>
        <begin position="125"/>
        <end position="379"/>
    </location>
</feature>
<feature type="domain" description="EF-hand 1" evidence="4">
    <location>
        <begin position="425"/>
        <end position="460"/>
    </location>
</feature>
<feature type="domain" description="EF-hand 2" evidence="4">
    <location>
        <begin position="462"/>
        <end position="495"/>
    </location>
</feature>
<feature type="domain" description="EF-hand 3" evidence="4">
    <location>
        <begin position="496"/>
        <end position="531"/>
    </location>
</feature>
<feature type="domain" description="EF-hand 4" evidence="4">
    <location>
        <begin position="534"/>
        <end position="568"/>
    </location>
</feature>
<feature type="region of interest" description="J domain" evidence="2">
    <location>
        <begin position="400"/>
        <end position="435"/>
    </location>
</feature>
<feature type="short sequence motif" description="J domain autoinhibitory motif" evidence="2">
    <location>
        <begin position="400"/>
        <end position="408"/>
    </location>
</feature>
<feature type="short sequence motif" description="J domain EF-hand interaction motif" evidence="2">
    <location>
        <begin position="409"/>
        <end position="418"/>
    </location>
</feature>
<feature type="active site" description="Proton acceptor" evidence="5">
    <location>
        <position position="245"/>
    </location>
</feature>
<feature type="binding site" evidence="3">
    <location>
        <begin position="131"/>
        <end position="139"/>
    </location>
    <ligand>
        <name>ATP</name>
        <dbReference type="ChEBI" id="CHEBI:30616"/>
    </ligand>
</feature>
<feature type="binding site" evidence="3">
    <location>
        <position position="154"/>
    </location>
    <ligand>
        <name>ATP</name>
        <dbReference type="ChEBI" id="CHEBI:30616"/>
    </ligand>
</feature>
<feature type="binding site" evidence="4">
    <location>
        <position position="438"/>
    </location>
    <ligand>
        <name>Ca(2+)</name>
        <dbReference type="ChEBI" id="CHEBI:29108"/>
        <label>1</label>
    </ligand>
</feature>
<feature type="binding site" evidence="4">
    <location>
        <position position="440"/>
    </location>
    <ligand>
        <name>Ca(2+)</name>
        <dbReference type="ChEBI" id="CHEBI:29108"/>
        <label>1</label>
    </ligand>
</feature>
<feature type="binding site" evidence="4">
    <location>
        <position position="442"/>
    </location>
    <ligand>
        <name>Ca(2+)</name>
        <dbReference type="ChEBI" id="CHEBI:29108"/>
        <label>1</label>
    </ligand>
</feature>
<feature type="binding site" evidence="4">
    <location>
        <position position="449"/>
    </location>
    <ligand>
        <name>Ca(2+)</name>
        <dbReference type="ChEBI" id="CHEBI:29108"/>
        <label>1</label>
    </ligand>
</feature>
<feature type="binding site" evidence="4">
    <location>
        <position position="473"/>
    </location>
    <ligand>
        <name>Ca(2+)</name>
        <dbReference type="ChEBI" id="CHEBI:29108"/>
        <label>2</label>
    </ligand>
</feature>
<feature type="binding site" evidence="4">
    <location>
        <position position="475"/>
    </location>
    <ligand>
        <name>Ca(2+)</name>
        <dbReference type="ChEBI" id="CHEBI:29108"/>
        <label>2</label>
    </ligand>
</feature>
<feature type="binding site" evidence="4">
    <location>
        <position position="477"/>
    </location>
    <ligand>
        <name>Ca(2+)</name>
        <dbReference type="ChEBI" id="CHEBI:29108"/>
        <label>2</label>
    </ligand>
</feature>
<feature type="binding site" evidence="4">
    <location>
        <position position="484"/>
    </location>
    <ligand>
        <name>Ca(2+)</name>
        <dbReference type="ChEBI" id="CHEBI:29108"/>
        <label>2</label>
    </ligand>
</feature>
<feature type="binding site" evidence="4">
    <location>
        <position position="509"/>
    </location>
    <ligand>
        <name>Ca(2+)</name>
        <dbReference type="ChEBI" id="CHEBI:29108"/>
        <label>3</label>
    </ligand>
</feature>
<feature type="binding site" evidence="4">
    <location>
        <position position="511"/>
    </location>
    <ligand>
        <name>Ca(2+)</name>
        <dbReference type="ChEBI" id="CHEBI:29108"/>
        <label>3</label>
    </ligand>
</feature>
<feature type="binding site" evidence="4">
    <location>
        <position position="513"/>
    </location>
    <ligand>
        <name>Ca(2+)</name>
        <dbReference type="ChEBI" id="CHEBI:29108"/>
        <label>3</label>
    </ligand>
</feature>
<feature type="binding site" evidence="4">
    <location>
        <position position="520"/>
    </location>
    <ligand>
        <name>Ca(2+)</name>
        <dbReference type="ChEBI" id="CHEBI:29108"/>
        <label>3</label>
    </ligand>
</feature>
<feature type="binding site" evidence="4">
    <location>
        <position position="547"/>
    </location>
    <ligand>
        <name>Ca(2+)</name>
        <dbReference type="ChEBI" id="CHEBI:29108"/>
        <label>4</label>
    </ligand>
</feature>
<feature type="binding site" evidence="4">
    <location>
        <position position="549"/>
    </location>
    <ligand>
        <name>Ca(2+)</name>
        <dbReference type="ChEBI" id="CHEBI:29108"/>
        <label>4</label>
    </ligand>
</feature>
<feature type="binding site" evidence="4">
    <location>
        <position position="551"/>
    </location>
    <ligand>
        <name>Ca(2+)</name>
        <dbReference type="ChEBI" id="CHEBI:29108"/>
        <label>4</label>
    </ligand>
</feature>
<feature type="binding site" evidence="4">
    <location>
        <position position="558"/>
    </location>
    <ligand>
        <name>Ca(2+)</name>
        <dbReference type="ChEBI" id="CHEBI:29108"/>
        <label>4</label>
    </ligand>
</feature>
<proteinExistence type="evidence at protein level"/>
<comment type="function">
    <text evidence="1 6 7 8">Calcium-dependent protein kinase which acts as a sensor and effector of intracellular Ca(2+) levels probably in part downstream of cGMP-activated PKG kinase (PubMed:20466936, PubMed:31915223). Plays a central role in host erythrocytes and hepatocytes infection cycles (PubMed:20466936, PubMed:29487234). During the liver stage, involved in sporozoite motility and thus in sporozoite invasion of host hepatocytes, probably together with CDPK1 and CDPK4 (By similarity). Involved in merosome egress from host hepatocytes, probably together with CDPK4 (By similarity). Required for the release of hepatic merozoites from merosomes in the host blood stream (By similarity). During the asexual blood stage, required for merozoite egress from host erythrocytes by triggering microneme secretion (PubMed:20466936, PubMed:29487234). Phosphorylates transporter NPT1 at late schizont stage (PubMed:31915223).</text>
</comment>
<comment type="catalytic activity">
    <reaction evidence="6 8">
        <text>L-seryl-[protein] + ATP = O-phospho-L-seryl-[protein] + ADP + H(+)</text>
        <dbReference type="Rhea" id="RHEA:17989"/>
        <dbReference type="Rhea" id="RHEA-COMP:9863"/>
        <dbReference type="Rhea" id="RHEA-COMP:11604"/>
        <dbReference type="ChEBI" id="CHEBI:15378"/>
        <dbReference type="ChEBI" id="CHEBI:29999"/>
        <dbReference type="ChEBI" id="CHEBI:30616"/>
        <dbReference type="ChEBI" id="CHEBI:83421"/>
        <dbReference type="ChEBI" id="CHEBI:456216"/>
        <dbReference type="EC" id="2.7.11.1"/>
    </reaction>
</comment>
<comment type="catalytic activity">
    <reaction evidence="6 8">
        <text>L-threonyl-[protein] + ATP = O-phospho-L-threonyl-[protein] + ADP + H(+)</text>
        <dbReference type="Rhea" id="RHEA:46608"/>
        <dbReference type="Rhea" id="RHEA-COMP:11060"/>
        <dbReference type="Rhea" id="RHEA-COMP:11605"/>
        <dbReference type="ChEBI" id="CHEBI:15378"/>
        <dbReference type="ChEBI" id="CHEBI:30013"/>
        <dbReference type="ChEBI" id="CHEBI:30616"/>
        <dbReference type="ChEBI" id="CHEBI:61977"/>
        <dbReference type="ChEBI" id="CHEBI:456216"/>
        <dbReference type="EC" id="2.7.11.1"/>
    </reaction>
</comment>
<comment type="cofactor">
    <cofactor evidence="6">
        <name>Mg(2+)</name>
        <dbReference type="ChEBI" id="CHEBI:18420"/>
    </cofactor>
</comment>
<comment type="activity regulation">
    <text evidence="2 6">Activated by calcium (PubMed:20466936). Upon calcium binding to the EF-hand domains, the C-terminus of the junction domain (J domain) undergoes a conformational change which results in the dissociation of the pseudo-substrate inhibitory motif from the catalytic domain (By similarity). This, in turn, may facilitate the autophosphorylation of the activation loop at Thr-285, which leads to the kinase activation (By similarity).</text>
</comment>
<comment type="subcellular location">
    <subcellularLocation>
        <location evidence="7">Cytoplasm</location>
    </subcellularLocation>
    <subcellularLocation>
        <location evidence="7">Cytoplasmic vesicle</location>
        <location evidence="7">Secretory vesicle</location>
        <location evidence="7">Microneme membrane</location>
        <topology evidence="7">Peripheral membrane protein</topology>
        <orientation evidence="7">Cytoplasmic side</orientation>
    </subcellularLocation>
    <subcellularLocation>
        <location evidence="6 7 8">Cell membrane</location>
        <topology evidence="10">Peripheral membrane protein</topology>
        <orientation evidence="11">Cytoplasmic side</orientation>
    </subcellularLocation>
    <text evidence="7">During the late stages of schizogony, localizes to the cytoplasm in immature daughter merozoites, co-localizes with AMA1 to a subset of micronemes and to the apical region in maturing daughter merozoites, and near the plasma membrane in mature daughter and free merozoites.</text>
</comment>
<comment type="developmental stage">
    <text evidence="6">Expressed at the blood stage in schizonts (at protein level).</text>
</comment>
<comment type="domain">
    <text evidence="2">The junction domain (J domain) is composed of 2 motifs that maintain the kinase inactive (By similarity). The N-terminal autoinhibitory motif acts as a pseudosubstrate inhibiting the catalytic domain while the C-terminal motif binds the EF-hand domains (By similarity).</text>
</comment>
<comment type="PTM">
    <text evidence="9">May be palmitoylated.</text>
</comment>
<comment type="PTM">
    <text evidence="6">Autophosphorylated in vitro.</text>
</comment>
<comment type="disruption phenotype">
    <text evidence="6 7 8">Impaired replication in host erythrocytes (PubMed:20466936). Parasite development is arrested at the late schizont stage before the rupture of the parasitophorous vacuole membrane rupture, however, the daughter merozoites are fully mature and their number per schizont is not affected (PubMed:20466936, PubMed:29487234). Loss of secretion of AMA1-containing and EBA175-containing micronemes (PubMed:29487234). SUB1-mediated processing of AMA1 and SERA5, which is part of the protease cascade involved in parasite egress, is reduced (PubMed:29487234). At the late schizont stage, phosphorylation of several transmembrane- and membrane-associated proteins and proteins associated with transport activity is reduced (PubMed:31915223).</text>
</comment>
<comment type="similarity">
    <text evidence="11">Belongs to the protein kinase superfamily. Ser/Thr protein kinase family. CDPK subfamily.</text>
</comment>
<protein>
    <recommendedName>
        <fullName evidence="10">Calcium-dependent protein kinase 5</fullName>
        <ecNumber evidence="6 8">2.7.11.1</ecNumber>
    </recommendedName>
    <alternativeName>
        <fullName evidence="10">PfCDPK5</fullName>
    </alternativeName>
</protein>